<evidence type="ECO:0000255" key="1">
    <source>
        <dbReference type="HAMAP-Rule" id="MF_01227"/>
    </source>
</evidence>
<gene>
    <name evidence="1" type="primary">pyrG</name>
    <name type="ordered locus">IL0773</name>
</gene>
<reference key="1">
    <citation type="journal article" date="2004" name="Proc. Natl. Acad. Sci. U.S.A.">
        <title>Genome sequence of the deep-sea gamma-proteobacterium Idiomarina loihiensis reveals amino acid fermentation as a source of carbon and energy.</title>
        <authorList>
            <person name="Hou S."/>
            <person name="Saw J.H."/>
            <person name="Lee K.S."/>
            <person name="Freitas T.A."/>
            <person name="Belisle C."/>
            <person name="Kawarabayasi Y."/>
            <person name="Donachie S.P."/>
            <person name="Pikina A."/>
            <person name="Galperin M.Y."/>
            <person name="Koonin E.V."/>
            <person name="Makarova K.S."/>
            <person name="Omelchenko M.V."/>
            <person name="Sorokin A."/>
            <person name="Wolf Y.I."/>
            <person name="Li Q.X."/>
            <person name="Keum Y.S."/>
            <person name="Campbell S."/>
            <person name="Denery J."/>
            <person name="Aizawa S."/>
            <person name="Shibata S."/>
            <person name="Malahoff A."/>
            <person name="Alam M."/>
        </authorList>
    </citation>
    <scope>NUCLEOTIDE SEQUENCE [LARGE SCALE GENOMIC DNA]</scope>
    <source>
        <strain>ATCC BAA-735 / DSM 15497 / L2-TR</strain>
    </source>
</reference>
<comment type="function">
    <text evidence="1">Catalyzes the ATP-dependent amination of UTP to CTP with either L-glutamine or ammonia as the source of nitrogen. Regulates intracellular CTP levels through interactions with the four ribonucleotide triphosphates.</text>
</comment>
<comment type="catalytic activity">
    <reaction evidence="1">
        <text>UTP + L-glutamine + ATP + H2O = CTP + L-glutamate + ADP + phosphate + 2 H(+)</text>
        <dbReference type="Rhea" id="RHEA:26426"/>
        <dbReference type="ChEBI" id="CHEBI:15377"/>
        <dbReference type="ChEBI" id="CHEBI:15378"/>
        <dbReference type="ChEBI" id="CHEBI:29985"/>
        <dbReference type="ChEBI" id="CHEBI:30616"/>
        <dbReference type="ChEBI" id="CHEBI:37563"/>
        <dbReference type="ChEBI" id="CHEBI:43474"/>
        <dbReference type="ChEBI" id="CHEBI:46398"/>
        <dbReference type="ChEBI" id="CHEBI:58359"/>
        <dbReference type="ChEBI" id="CHEBI:456216"/>
        <dbReference type="EC" id="6.3.4.2"/>
    </reaction>
</comment>
<comment type="catalytic activity">
    <reaction evidence="1">
        <text>L-glutamine + H2O = L-glutamate + NH4(+)</text>
        <dbReference type="Rhea" id="RHEA:15889"/>
        <dbReference type="ChEBI" id="CHEBI:15377"/>
        <dbReference type="ChEBI" id="CHEBI:28938"/>
        <dbReference type="ChEBI" id="CHEBI:29985"/>
        <dbReference type="ChEBI" id="CHEBI:58359"/>
    </reaction>
</comment>
<comment type="catalytic activity">
    <reaction evidence="1">
        <text>UTP + NH4(+) + ATP = CTP + ADP + phosphate + 2 H(+)</text>
        <dbReference type="Rhea" id="RHEA:16597"/>
        <dbReference type="ChEBI" id="CHEBI:15378"/>
        <dbReference type="ChEBI" id="CHEBI:28938"/>
        <dbReference type="ChEBI" id="CHEBI:30616"/>
        <dbReference type="ChEBI" id="CHEBI:37563"/>
        <dbReference type="ChEBI" id="CHEBI:43474"/>
        <dbReference type="ChEBI" id="CHEBI:46398"/>
        <dbReference type="ChEBI" id="CHEBI:456216"/>
    </reaction>
</comment>
<comment type="activity regulation">
    <text evidence="1">Allosterically activated by GTP, when glutamine is the substrate; GTP has no effect on the reaction when ammonia is the substrate. The allosteric effector GTP functions by stabilizing the protein conformation that binds the tetrahedral intermediate(s) formed during glutamine hydrolysis. Inhibited by the product CTP, via allosteric rather than competitive inhibition.</text>
</comment>
<comment type="pathway">
    <text evidence="1">Pyrimidine metabolism; CTP biosynthesis via de novo pathway; CTP from UDP: step 2/2.</text>
</comment>
<comment type="subunit">
    <text evidence="1">Homotetramer.</text>
</comment>
<comment type="miscellaneous">
    <text evidence="1">CTPSs have evolved a hybrid strategy for distinguishing between UTP and CTP. The overlapping regions of the product feedback inhibitory and substrate sites recognize a common feature in both compounds, the triphosphate moiety. To differentiate isosteric substrate and product pyrimidine rings, an additional pocket far from the expected kinase/ligase catalytic site, specifically recognizes the cytosine and ribose portions of the product inhibitor.</text>
</comment>
<comment type="similarity">
    <text evidence="1">Belongs to the CTP synthase family.</text>
</comment>
<accession>Q5R142</accession>
<feature type="chain" id="PRO_0000266136" description="CTP synthase">
    <location>
        <begin position="1"/>
        <end position="545"/>
    </location>
</feature>
<feature type="domain" description="Glutamine amidotransferase type-1" evidence="1">
    <location>
        <begin position="291"/>
        <end position="542"/>
    </location>
</feature>
<feature type="region of interest" description="Amidoligase domain" evidence="1">
    <location>
        <begin position="1"/>
        <end position="266"/>
    </location>
</feature>
<feature type="active site" description="Nucleophile; for glutamine hydrolysis" evidence="1">
    <location>
        <position position="379"/>
    </location>
</feature>
<feature type="active site" evidence="1">
    <location>
        <position position="515"/>
    </location>
</feature>
<feature type="active site" evidence="1">
    <location>
        <position position="517"/>
    </location>
</feature>
<feature type="binding site" evidence="1">
    <location>
        <position position="14"/>
    </location>
    <ligand>
        <name>CTP</name>
        <dbReference type="ChEBI" id="CHEBI:37563"/>
        <note>allosteric inhibitor</note>
    </ligand>
</feature>
<feature type="binding site" evidence="1">
    <location>
        <position position="14"/>
    </location>
    <ligand>
        <name>UTP</name>
        <dbReference type="ChEBI" id="CHEBI:46398"/>
    </ligand>
</feature>
<feature type="binding site" evidence="1">
    <location>
        <begin position="15"/>
        <end position="20"/>
    </location>
    <ligand>
        <name>ATP</name>
        <dbReference type="ChEBI" id="CHEBI:30616"/>
    </ligand>
</feature>
<feature type="binding site" evidence="1">
    <location>
        <position position="72"/>
    </location>
    <ligand>
        <name>ATP</name>
        <dbReference type="ChEBI" id="CHEBI:30616"/>
    </ligand>
</feature>
<feature type="binding site" evidence="1">
    <location>
        <position position="72"/>
    </location>
    <ligand>
        <name>Mg(2+)</name>
        <dbReference type="ChEBI" id="CHEBI:18420"/>
    </ligand>
</feature>
<feature type="binding site" evidence="1">
    <location>
        <position position="140"/>
    </location>
    <ligand>
        <name>Mg(2+)</name>
        <dbReference type="ChEBI" id="CHEBI:18420"/>
    </ligand>
</feature>
<feature type="binding site" evidence="1">
    <location>
        <begin position="147"/>
        <end position="149"/>
    </location>
    <ligand>
        <name>CTP</name>
        <dbReference type="ChEBI" id="CHEBI:37563"/>
        <note>allosteric inhibitor</note>
    </ligand>
</feature>
<feature type="binding site" evidence="1">
    <location>
        <begin position="187"/>
        <end position="192"/>
    </location>
    <ligand>
        <name>CTP</name>
        <dbReference type="ChEBI" id="CHEBI:37563"/>
        <note>allosteric inhibitor</note>
    </ligand>
</feature>
<feature type="binding site" evidence="1">
    <location>
        <begin position="187"/>
        <end position="192"/>
    </location>
    <ligand>
        <name>UTP</name>
        <dbReference type="ChEBI" id="CHEBI:46398"/>
    </ligand>
</feature>
<feature type="binding site" evidence="1">
    <location>
        <position position="223"/>
    </location>
    <ligand>
        <name>CTP</name>
        <dbReference type="ChEBI" id="CHEBI:37563"/>
        <note>allosteric inhibitor</note>
    </ligand>
</feature>
<feature type="binding site" evidence="1">
    <location>
        <position position="223"/>
    </location>
    <ligand>
        <name>UTP</name>
        <dbReference type="ChEBI" id="CHEBI:46398"/>
    </ligand>
</feature>
<feature type="binding site" evidence="1">
    <location>
        <begin position="239"/>
        <end position="241"/>
    </location>
    <ligand>
        <name>ATP</name>
        <dbReference type="ChEBI" id="CHEBI:30616"/>
    </ligand>
</feature>
<feature type="binding site" evidence="1">
    <location>
        <position position="352"/>
    </location>
    <ligand>
        <name>L-glutamine</name>
        <dbReference type="ChEBI" id="CHEBI:58359"/>
    </ligand>
</feature>
<feature type="binding site" evidence="1">
    <location>
        <begin position="380"/>
        <end position="383"/>
    </location>
    <ligand>
        <name>L-glutamine</name>
        <dbReference type="ChEBI" id="CHEBI:58359"/>
    </ligand>
</feature>
<feature type="binding site" evidence="1">
    <location>
        <position position="403"/>
    </location>
    <ligand>
        <name>L-glutamine</name>
        <dbReference type="ChEBI" id="CHEBI:58359"/>
    </ligand>
</feature>
<feature type="binding site" evidence="1">
    <location>
        <position position="470"/>
    </location>
    <ligand>
        <name>L-glutamine</name>
        <dbReference type="ChEBI" id="CHEBI:58359"/>
    </ligand>
</feature>
<dbReference type="EC" id="6.3.4.2" evidence="1"/>
<dbReference type="EMBL" id="AE017340">
    <property type="protein sequence ID" value="AAV81614.1"/>
    <property type="molecule type" value="Genomic_DNA"/>
</dbReference>
<dbReference type="RefSeq" id="WP_011234025.1">
    <property type="nucleotide sequence ID" value="NC_006512.1"/>
</dbReference>
<dbReference type="SMR" id="Q5R142"/>
<dbReference type="STRING" id="283942.IL0773"/>
<dbReference type="GeneID" id="41335927"/>
<dbReference type="KEGG" id="ilo:IL0773"/>
<dbReference type="eggNOG" id="COG0504">
    <property type="taxonomic scope" value="Bacteria"/>
</dbReference>
<dbReference type="HOGENOM" id="CLU_011675_5_0_6"/>
<dbReference type="OrthoDB" id="9801107at2"/>
<dbReference type="UniPathway" id="UPA00159">
    <property type="reaction ID" value="UER00277"/>
</dbReference>
<dbReference type="Proteomes" id="UP000001171">
    <property type="component" value="Chromosome"/>
</dbReference>
<dbReference type="GO" id="GO:0005829">
    <property type="term" value="C:cytosol"/>
    <property type="evidence" value="ECO:0007669"/>
    <property type="project" value="TreeGrafter"/>
</dbReference>
<dbReference type="GO" id="GO:0005524">
    <property type="term" value="F:ATP binding"/>
    <property type="evidence" value="ECO:0007669"/>
    <property type="project" value="UniProtKB-KW"/>
</dbReference>
<dbReference type="GO" id="GO:0003883">
    <property type="term" value="F:CTP synthase activity"/>
    <property type="evidence" value="ECO:0007669"/>
    <property type="project" value="UniProtKB-UniRule"/>
</dbReference>
<dbReference type="GO" id="GO:0004359">
    <property type="term" value="F:glutaminase activity"/>
    <property type="evidence" value="ECO:0007669"/>
    <property type="project" value="RHEA"/>
</dbReference>
<dbReference type="GO" id="GO:0042802">
    <property type="term" value="F:identical protein binding"/>
    <property type="evidence" value="ECO:0007669"/>
    <property type="project" value="TreeGrafter"/>
</dbReference>
<dbReference type="GO" id="GO:0046872">
    <property type="term" value="F:metal ion binding"/>
    <property type="evidence" value="ECO:0007669"/>
    <property type="project" value="UniProtKB-KW"/>
</dbReference>
<dbReference type="GO" id="GO:0044210">
    <property type="term" value="P:'de novo' CTP biosynthetic process"/>
    <property type="evidence" value="ECO:0007669"/>
    <property type="project" value="UniProtKB-UniRule"/>
</dbReference>
<dbReference type="GO" id="GO:0019856">
    <property type="term" value="P:pyrimidine nucleobase biosynthetic process"/>
    <property type="evidence" value="ECO:0007669"/>
    <property type="project" value="TreeGrafter"/>
</dbReference>
<dbReference type="CDD" id="cd03113">
    <property type="entry name" value="CTPS_N"/>
    <property type="match status" value="1"/>
</dbReference>
<dbReference type="CDD" id="cd01746">
    <property type="entry name" value="GATase1_CTP_Synthase"/>
    <property type="match status" value="1"/>
</dbReference>
<dbReference type="FunFam" id="3.40.50.300:FF:000009">
    <property type="entry name" value="CTP synthase"/>
    <property type="match status" value="1"/>
</dbReference>
<dbReference type="FunFam" id="3.40.50.880:FF:000002">
    <property type="entry name" value="CTP synthase"/>
    <property type="match status" value="1"/>
</dbReference>
<dbReference type="Gene3D" id="3.40.50.880">
    <property type="match status" value="1"/>
</dbReference>
<dbReference type="Gene3D" id="3.40.50.300">
    <property type="entry name" value="P-loop containing nucleotide triphosphate hydrolases"/>
    <property type="match status" value="1"/>
</dbReference>
<dbReference type="HAMAP" id="MF_01227">
    <property type="entry name" value="PyrG"/>
    <property type="match status" value="1"/>
</dbReference>
<dbReference type="InterPro" id="IPR029062">
    <property type="entry name" value="Class_I_gatase-like"/>
</dbReference>
<dbReference type="InterPro" id="IPR004468">
    <property type="entry name" value="CTP_synthase"/>
</dbReference>
<dbReference type="InterPro" id="IPR017456">
    <property type="entry name" value="CTP_synthase_N"/>
</dbReference>
<dbReference type="InterPro" id="IPR017926">
    <property type="entry name" value="GATASE"/>
</dbReference>
<dbReference type="InterPro" id="IPR033828">
    <property type="entry name" value="GATase1_CTP_Synthase"/>
</dbReference>
<dbReference type="InterPro" id="IPR027417">
    <property type="entry name" value="P-loop_NTPase"/>
</dbReference>
<dbReference type="NCBIfam" id="NF003792">
    <property type="entry name" value="PRK05380.1"/>
    <property type="match status" value="1"/>
</dbReference>
<dbReference type="NCBIfam" id="TIGR00337">
    <property type="entry name" value="PyrG"/>
    <property type="match status" value="1"/>
</dbReference>
<dbReference type="PANTHER" id="PTHR11550">
    <property type="entry name" value="CTP SYNTHASE"/>
    <property type="match status" value="1"/>
</dbReference>
<dbReference type="PANTHER" id="PTHR11550:SF0">
    <property type="entry name" value="CTP SYNTHASE-RELATED"/>
    <property type="match status" value="1"/>
</dbReference>
<dbReference type="Pfam" id="PF06418">
    <property type="entry name" value="CTP_synth_N"/>
    <property type="match status" value="1"/>
</dbReference>
<dbReference type="Pfam" id="PF00117">
    <property type="entry name" value="GATase"/>
    <property type="match status" value="1"/>
</dbReference>
<dbReference type="SUPFAM" id="SSF52317">
    <property type="entry name" value="Class I glutamine amidotransferase-like"/>
    <property type="match status" value="1"/>
</dbReference>
<dbReference type="SUPFAM" id="SSF52540">
    <property type="entry name" value="P-loop containing nucleoside triphosphate hydrolases"/>
    <property type="match status" value="1"/>
</dbReference>
<dbReference type="PROSITE" id="PS51273">
    <property type="entry name" value="GATASE_TYPE_1"/>
    <property type="match status" value="1"/>
</dbReference>
<organism>
    <name type="scientific">Idiomarina loihiensis (strain ATCC BAA-735 / DSM 15497 / L2-TR)</name>
    <dbReference type="NCBI Taxonomy" id="283942"/>
    <lineage>
        <taxon>Bacteria</taxon>
        <taxon>Pseudomonadati</taxon>
        <taxon>Pseudomonadota</taxon>
        <taxon>Gammaproteobacteria</taxon>
        <taxon>Alteromonadales</taxon>
        <taxon>Idiomarinaceae</taxon>
        <taxon>Idiomarina</taxon>
    </lineage>
</organism>
<keyword id="KW-0067">ATP-binding</keyword>
<keyword id="KW-0315">Glutamine amidotransferase</keyword>
<keyword id="KW-0436">Ligase</keyword>
<keyword id="KW-0460">Magnesium</keyword>
<keyword id="KW-0479">Metal-binding</keyword>
<keyword id="KW-0547">Nucleotide-binding</keyword>
<keyword id="KW-0665">Pyrimidine biosynthesis</keyword>
<keyword id="KW-1185">Reference proteome</keyword>
<proteinExistence type="inferred from homology"/>
<name>PYRG_IDILO</name>
<sequence length="545" mass="60547">MATNYIFVTGGVVSSLGKGIAAASLAAILEARGLNVTIMKLDPYINVDPGTMSPIQHGEVFVTVDGAETDLDLGHYERFIRTRMTSSNNFTTGRVYEDIIRRERKGEFLGATIQVIPHITNEIKRRVIEGSKGFDIAIIEIGGTVGDIESQPFLEAIRQLGTEIGRDHTLFMHLTLVPFLGAAGEVKTKPTQHSVKELRSIGIQPDVLVCRSDRSLPATERSKIALFTNVEERAVIGLRDVDSIYKIPSMLKAQSLDDIVTKRFNLDCPEADLHEWEEVLYQESNPNGEVTVGFVGKYVELPDAYKSVNEALAHAGLKNRLTVNIRYIDSQDLETKGTSKLEDVDAILVPGGFGDRGIEGKLIAAKYARENNIPYLGICLGMQVAMIEFARNVAGLTGANSTEFDENCSDPVVGLITEWMDASGQKELRDKHSDLGGTMRLGSQECHLEKGSKALKMYGKETIEERHRHRYEVNNHYIEPLEKAGLKITGYSHDKQLVEILENPKHRWFVAVQFHPEFTSTPRDGHPLFKGFIEAAGEFHKERLG</sequence>
<protein>
    <recommendedName>
        <fullName evidence="1">CTP synthase</fullName>
        <ecNumber evidence="1">6.3.4.2</ecNumber>
    </recommendedName>
    <alternativeName>
        <fullName evidence="1">Cytidine 5'-triphosphate synthase</fullName>
    </alternativeName>
    <alternativeName>
        <fullName evidence="1">Cytidine triphosphate synthetase</fullName>
        <shortName evidence="1">CTP synthetase</shortName>
        <shortName evidence="1">CTPS</shortName>
    </alternativeName>
    <alternativeName>
        <fullName evidence="1">UTP--ammonia ligase</fullName>
    </alternativeName>
</protein>